<feature type="chain" id="PRO_1000212163" description="Glutamyl-tRNA(Gln) amidotransferase subunit E">
    <location>
        <begin position="1"/>
        <end position="629"/>
    </location>
</feature>
<feature type="region of interest" description="Disordered" evidence="2">
    <location>
        <begin position="405"/>
        <end position="426"/>
    </location>
</feature>
<organism>
    <name type="scientific">Thermococcus sibiricus (strain DSM 12597 / MM 739)</name>
    <dbReference type="NCBI Taxonomy" id="604354"/>
    <lineage>
        <taxon>Archaea</taxon>
        <taxon>Methanobacteriati</taxon>
        <taxon>Methanobacteriota</taxon>
        <taxon>Thermococci</taxon>
        <taxon>Thermococcales</taxon>
        <taxon>Thermococcaceae</taxon>
        <taxon>Thermococcus</taxon>
    </lineage>
</organism>
<evidence type="ECO:0000255" key="1">
    <source>
        <dbReference type="HAMAP-Rule" id="MF_00588"/>
    </source>
</evidence>
<evidence type="ECO:0000256" key="2">
    <source>
        <dbReference type="SAM" id="MobiDB-lite"/>
    </source>
</evidence>
<comment type="function">
    <text evidence="1">Allows the formation of correctly charged Gln-tRNA(Gln) through the transamidation of misacylated Glu-tRNA(Gln) in organisms which lack glutaminyl-tRNA synthetase. The reaction takes place in the presence of glutamine and ATP through an activated gamma-phospho-Glu-tRNA(Gln). The GatDE system is specific for glutamate and does not act on aspartate.</text>
</comment>
<comment type="catalytic activity">
    <reaction evidence="1">
        <text>L-glutamyl-tRNA(Gln) + L-glutamine + ATP + H2O = L-glutaminyl-tRNA(Gln) + L-glutamate + ADP + phosphate + H(+)</text>
        <dbReference type="Rhea" id="RHEA:17521"/>
        <dbReference type="Rhea" id="RHEA-COMP:9681"/>
        <dbReference type="Rhea" id="RHEA-COMP:9684"/>
        <dbReference type="ChEBI" id="CHEBI:15377"/>
        <dbReference type="ChEBI" id="CHEBI:15378"/>
        <dbReference type="ChEBI" id="CHEBI:29985"/>
        <dbReference type="ChEBI" id="CHEBI:30616"/>
        <dbReference type="ChEBI" id="CHEBI:43474"/>
        <dbReference type="ChEBI" id="CHEBI:58359"/>
        <dbReference type="ChEBI" id="CHEBI:78520"/>
        <dbReference type="ChEBI" id="CHEBI:78521"/>
        <dbReference type="ChEBI" id="CHEBI:456216"/>
    </reaction>
</comment>
<comment type="subunit">
    <text evidence="1">Heterodimer of GatD and GatE.</text>
</comment>
<comment type="similarity">
    <text evidence="1">Belongs to the GatB/GatE family. GatE subfamily.</text>
</comment>
<keyword id="KW-0067">ATP-binding</keyword>
<keyword id="KW-0436">Ligase</keyword>
<keyword id="KW-0547">Nucleotide-binding</keyword>
<keyword id="KW-0648">Protein biosynthesis</keyword>
<keyword id="KW-1185">Reference proteome</keyword>
<proteinExistence type="inferred from homology"/>
<gene>
    <name evidence="1" type="primary">gatE</name>
    <name type="ordered locus">TSIB_0609</name>
</gene>
<protein>
    <recommendedName>
        <fullName evidence="1">Glutamyl-tRNA(Gln) amidotransferase subunit E</fullName>
        <shortName evidence="1">Glu-ADT subunit E</shortName>
        <ecNumber evidence="1">6.3.5.-</ecNumber>
    </recommendedName>
</protein>
<name>GATE_THESM</name>
<reference key="1">
    <citation type="journal article" date="2009" name="Appl. Environ. Microbiol.">
        <title>Metabolic versatility and indigenous origin of the archaeon Thermococcus sibiricus, isolated from a siberian oil reservoir, as revealed by genome analysis.</title>
        <authorList>
            <person name="Mardanov A.V."/>
            <person name="Ravin N.V."/>
            <person name="Svetlitchnyi V.A."/>
            <person name="Beletsky A.V."/>
            <person name="Miroshnichenko M.L."/>
            <person name="Bonch-Osmolovskaya E.A."/>
            <person name="Skryabin K.G."/>
        </authorList>
    </citation>
    <scope>NUCLEOTIDE SEQUENCE [LARGE SCALE GENOMIC DNA]</scope>
    <source>
        <strain>DSM 12597 / MM 739</strain>
    </source>
</reference>
<accession>C6A229</accession>
<dbReference type="EC" id="6.3.5.-" evidence="1"/>
<dbReference type="EMBL" id="CP001463">
    <property type="protein sequence ID" value="ACS89674.1"/>
    <property type="molecule type" value="Genomic_DNA"/>
</dbReference>
<dbReference type="RefSeq" id="WP_015848894.1">
    <property type="nucleotide sequence ID" value="NC_012883.1"/>
</dbReference>
<dbReference type="SMR" id="C6A229"/>
<dbReference type="STRING" id="604354.TSIB_0609"/>
<dbReference type="GeneID" id="8095597"/>
<dbReference type="KEGG" id="tsi:TSIB_0609"/>
<dbReference type="eggNOG" id="arCOG01719">
    <property type="taxonomic scope" value="Archaea"/>
</dbReference>
<dbReference type="HOGENOM" id="CLU_030702_0_0_2"/>
<dbReference type="OrthoDB" id="7316at2157"/>
<dbReference type="Proteomes" id="UP000009079">
    <property type="component" value="Chromosome"/>
</dbReference>
<dbReference type="GO" id="GO:0005737">
    <property type="term" value="C:cytoplasm"/>
    <property type="evidence" value="ECO:0007669"/>
    <property type="project" value="InterPro"/>
</dbReference>
<dbReference type="GO" id="GO:0004812">
    <property type="term" value="F:aminoacyl-tRNA ligase activity"/>
    <property type="evidence" value="ECO:0007669"/>
    <property type="project" value="InterPro"/>
</dbReference>
<dbReference type="GO" id="GO:0005524">
    <property type="term" value="F:ATP binding"/>
    <property type="evidence" value="ECO:0007669"/>
    <property type="project" value="UniProtKB-KW"/>
</dbReference>
<dbReference type="GO" id="GO:0050567">
    <property type="term" value="F:glutaminyl-tRNA synthase (glutamine-hydrolyzing) activity"/>
    <property type="evidence" value="ECO:0007669"/>
    <property type="project" value="UniProtKB-UniRule"/>
</dbReference>
<dbReference type="GO" id="GO:0070681">
    <property type="term" value="P:glutaminyl-tRNAGln biosynthesis via transamidation"/>
    <property type="evidence" value="ECO:0007669"/>
    <property type="project" value="TreeGrafter"/>
</dbReference>
<dbReference type="GO" id="GO:0006412">
    <property type="term" value="P:translation"/>
    <property type="evidence" value="ECO:0007669"/>
    <property type="project" value="UniProtKB-UniRule"/>
</dbReference>
<dbReference type="FunFam" id="1.10.10.410:FF:000003">
    <property type="entry name" value="Glutamyl-tRNA(Gln) amidotransferase subunit E"/>
    <property type="match status" value="1"/>
</dbReference>
<dbReference type="FunFam" id="1.10.150.380:FF:000002">
    <property type="entry name" value="Glutamyl-tRNA(Gln) amidotransferase subunit E"/>
    <property type="match status" value="1"/>
</dbReference>
<dbReference type="FunFam" id="3.30.1360.30:FF:000003">
    <property type="entry name" value="Glutamyl-tRNA(Gln) amidotransferase subunit E"/>
    <property type="match status" value="1"/>
</dbReference>
<dbReference type="Gene3D" id="1.10.10.410">
    <property type="match status" value="1"/>
</dbReference>
<dbReference type="Gene3D" id="3.30.1360.30">
    <property type="entry name" value="GAD-like domain"/>
    <property type="match status" value="1"/>
</dbReference>
<dbReference type="Gene3D" id="1.10.150.380">
    <property type="entry name" value="GatB domain, N-terminal subdomain"/>
    <property type="match status" value="1"/>
</dbReference>
<dbReference type="HAMAP" id="MF_00588">
    <property type="entry name" value="GatE"/>
    <property type="match status" value="1"/>
</dbReference>
<dbReference type="InterPro" id="IPR017959">
    <property type="entry name" value="Asn/Gln-tRNA_amidoTrfase_suB/E"/>
</dbReference>
<dbReference type="InterPro" id="IPR006075">
    <property type="entry name" value="Asn/Gln-tRNA_Trfase_suB/E_cat"/>
</dbReference>
<dbReference type="InterPro" id="IPR018027">
    <property type="entry name" value="Asn/Gln_amidotransferase"/>
</dbReference>
<dbReference type="InterPro" id="IPR003789">
    <property type="entry name" value="Asn/Gln_tRNA_amidoTrase-B-like"/>
</dbReference>
<dbReference type="InterPro" id="IPR004115">
    <property type="entry name" value="GAD-like_sf"/>
</dbReference>
<dbReference type="InterPro" id="IPR029351">
    <property type="entry name" value="GAD_dom"/>
</dbReference>
<dbReference type="InterPro" id="IPR042114">
    <property type="entry name" value="GatB_C_1"/>
</dbReference>
<dbReference type="InterPro" id="IPR023168">
    <property type="entry name" value="GatB_Yqey_C_2"/>
</dbReference>
<dbReference type="InterPro" id="IPR004414">
    <property type="entry name" value="GatE"/>
</dbReference>
<dbReference type="InterPro" id="IPR017958">
    <property type="entry name" value="Gln-tRNA_amidoTrfase_suB_CS"/>
</dbReference>
<dbReference type="InterPro" id="IPR014746">
    <property type="entry name" value="Gln_synth/guanido_kin_cat_dom"/>
</dbReference>
<dbReference type="NCBIfam" id="TIGR00134">
    <property type="entry name" value="gatE_arch"/>
    <property type="match status" value="1"/>
</dbReference>
<dbReference type="NCBIfam" id="NF003107">
    <property type="entry name" value="PRK04028.1"/>
    <property type="match status" value="1"/>
</dbReference>
<dbReference type="PANTHER" id="PTHR11659">
    <property type="entry name" value="GLUTAMYL-TRNA GLN AMIDOTRANSFERASE SUBUNIT B MITOCHONDRIAL AND PROKARYOTIC PET112-RELATED"/>
    <property type="match status" value="1"/>
</dbReference>
<dbReference type="PANTHER" id="PTHR11659:SF2">
    <property type="entry name" value="GLUTAMYL-TRNA(GLN) AMIDOTRANSFERASE SUBUNIT E"/>
    <property type="match status" value="1"/>
</dbReference>
<dbReference type="Pfam" id="PF02938">
    <property type="entry name" value="GAD"/>
    <property type="match status" value="1"/>
</dbReference>
<dbReference type="Pfam" id="PF02934">
    <property type="entry name" value="GatB_N"/>
    <property type="match status" value="1"/>
</dbReference>
<dbReference type="Pfam" id="PF02637">
    <property type="entry name" value="GatB_Yqey"/>
    <property type="match status" value="1"/>
</dbReference>
<dbReference type="SMART" id="SM00845">
    <property type="entry name" value="GatB_Yqey"/>
    <property type="match status" value="1"/>
</dbReference>
<dbReference type="SUPFAM" id="SSF55261">
    <property type="entry name" value="GAD domain-like"/>
    <property type="match status" value="1"/>
</dbReference>
<dbReference type="SUPFAM" id="SSF89095">
    <property type="entry name" value="GatB/YqeY motif"/>
    <property type="match status" value="1"/>
</dbReference>
<dbReference type="SUPFAM" id="SSF55931">
    <property type="entry name" value="Glutamine synthetase/guanido kinase"/>
    <property type="match status" value="1"/>
</dbReference>
<dbReference type="PROSITE" id="PS01234">
    <property type="entry name" value="GATB"/>
    <property type="match status" value="1"/>
</dbReference>
<sequence>MKVEFDYKSLGLKVGLEIHRQLDTKKLFSAVPSQLHDNVDFTFERRLRPTMSELGEIDQAALEEFKRGRAFVYEGNYKYTDLVYVDEEPPHMPDEEALKVALQITYLLNAIPVDEVHFMRKIVIDGSNVSGFQRTAIVGMNGKVDTPWGSVGIPTICLEEDACRIIEQGERKAIYRLDRLGIPLIEIATTPDIHHPEQAKIVAKFIGDALRATRKVKRGLGTIRQDLNVSIKGGARIEIKGVQELDMIPVIIEREVQRQLNLLKIKEELQKRGVKEEDLKEEFYDVTDIFSGTGSKIIARTLKKGGKILAIKLPKFRGLIGFEIQPGRRLGTEMADRAKKYVKGIFHIDELPNYGISQEEVDKVVERLNLGEFDAFVLVAAEEEIAKKALREILQRAREAISGVPEETRRALPDGNTQYMRPLPGKARMYPETDIPPIFMSEELKKEILENLPEYPQAKVNRYVKEYKIDKSLAQTLVDDERDELFEELIAMGIKPSLAASILVVVLKGLKKEVSTDNITETHIKDAFKLLHENKIAKEALEEIFKELALHPEKTALQVAEEKGLTLLSEGEVEKIIEEIVRENIDVVKEKGMGAMGMLMGRAMAKLRGKADGKLVNQLVRKKIQEFTS</sequence>